<keyword id="KW-0143">Chaperone</keyword>
<keyword id="KW-0963">Cytoplasm</keyword>
<keyword id="KW-0238">DNA-binding</keyword>
<keyword id="KW-1185">Reference proteome</keyword>
<dbReference type="EMBL" id="AE016828">
    <property type="protein sequence ID" value="AAO90636.2"/>
    <property type="status" value="ALT_INIT"/>
    <property type="molecule type" value="Genomic_DNA"/>
</dbReference>
<dbReference type="RefSeq" id="NP_820122.2">
    <property type="nucleotide sequence ID" value="NC_002971.3"/>
</dbReference>
<dbReference type="RefSeq" id="WP_010958020.1">
    <property type="nucleotide sequence ID" value="NC_002971.4"/>
</dbReference>
<dbReference type="RefSeq" id="WP_012220518.1">
    <property type="nucleotide sequence ID" value="NZ_CCYB01000037.1"/>
</dbReference>
<dbReference type="SMR" id="Q83CJ2"/>
<dbReference type="STRING" id="227377.CBU_1123"/>
<dbReference type="EnsemblBacteria" id="AAO90636">
    <property type="protein sequence ID" value="AAO90636"/>
    <property type="gene ID" value="CBU_1123"/>
</dbReference>
<dbReference type="GeneID" id="1209025"/>
<dbReference type="KEGG" id="cbu:CBU_1123"/>
<dbReference type="PATRIC" id="fig|227377.7.peg.1117"/>
<dbReference type="eggNOG" id="COG0484">
    <property type="taxonomic scope" value="Bacteria"/>
</dbReference>
<dbReference type="HOGENOM" id="CLU_017633_0_0_6"/>
<dbReference type="OrthoDB" id="9779889at2"/>
<dbReference type="Proteomes" id="UP000002671">
    <property type="component" value="Chromosome"/>
</dbReference>
<dbReference type="GO" id="GO:0005737">
    <property type="term" value="C:cytoplasm"/>
    <property type="evidence" value="ECO:0000318"/>
    <property type="project" value="GO_Central"/>
</dbReference>
<dbReference type="GO" id="GO:0009295">
    <property type="term" value="C:nucleoid"/>
    <property type="evidence" value="ECO:0007669"/>
    <property type="project" value="UniProtKB-SubCell"/>
</dbReference>
<dbReference type="GO" id="GO:0003681">
    <property type="term" value="F:bent DNA binding"/>
    <property type="evidence" value="ECO:0007669"/>
    <property type="project" value="UniProtKB-UniRule"/>
</dbReference>
<dbReference type="GO" id="GO:0051082">
    <property type="term" value="F:unfolded protein binding"/>
    <property type="evidence" value="ECO:0000318"/>
    <property type="project" value="GO_Central"/>
</dbReference>
<dbReference type="GO" id="GO:0051085">
    <property type="term" value="P:chaperone cofactor-dependent protein refolding"/>
    <property type="evidence" value="ECO:0000318"/>
    <property type="project" value="GO_Central"/>
</dbReference>
<dbReference type="GO" id="GO:0042026">
    <property type="term" value="P:protein refolding"/>
    <property type="evidence" value="ECO:0000318"/>
    <property type="project" value="GO_Central"/>
</dbReference>
<dbReference type="CDD" id="cd06257">
    <property type="entry name" value="DnaJ"/>
    <property type="match status" value="1"/>
</dbReference>
<dbReference type="CDD" id="cd10747">
    <property type="entry name" value="DnaJ_C"/>
    <property type="match status" value="1"/>
</dbReference>
<dbReference type="FunFam" id="1.10.287.110:FF:000135">
    <property type="entry name" value="Curved DNA binding protein"/>
    <property type="match status" value="1"/>
</dbReference>
<dbReference type="FunFam" id="2.60.260.20:FF:000008">
    <property type="entry name" value="Curved DNA-binding protein"/>
    <property type="match status" value="1"/>
</dbReference>
<dbReference type="FunFam" id="2.60.260.20:FF:000013">
    <property type="entry name" value="DnaJ subfamily B member 11"/>
    <property type="match status" value="1"/>
</dbReference>
<dbReference type="Gene3D" id="1.10.287.110">
    <property type="entry name" value="DnaJ domain"/>
    <property type="match status" value="1"/>
</dbReference>
<dbReference type="Gene3D" id="2.60.260.20">
    <property type="entry name" value="Urease metallochaperone UreE, N-terminal domain"/>
    <property type="match status" value="2"/>
</dbReference>
<dbReference type="HAMAP" id="MF_01154">
    <property type="entry name" value="CbpA"/>
    <property type="match status" value="1"/>
</dbReference>
<dbReference type="InterPro" id="IPR023859">
    <property type="entry name" value="DNA-bd_curved-DNA"/>
</dbReference>
<dbReference type="InterPro" id="IPR002939">
    <property type="entry name" value="DnaJ_C"/>
</dbReference>
<dbReference type="InterPro" id="IPR001623">
    <property type="entry name" value="DnaJ_domain"/>
</dbReference>
<dbReference type="InterPro" id="IPR018253">
    <property type="entry name" value="DnaJ_domain_CS"/>
</dbReference>
<dbReference type="InterPro" id="IPR008971">
    <property type="entry name" value="HSP40/DnaJ_pept-bd"/>
</dbReference>
<dbReference type="InterPro" id="IPR036869">
    <property type="entry name" value="J_dom_sf"/>
</dbReference>
<dbReference type="PANTHER" id="PTHR43096">
    <property type="entry name" value="DNAJ HOMOLOG 1, MITOCHONDRIAL-RELATED"/>
    <property type="match status" value="1"/>
</dbReference>
<dbReference type="PANTHER" id="PTHR43096:SF52">
    <property type="entry name" value="DNAJ HOMOLOG 1, MITOCHONDRIAL-RELATED"/>
    <property type="match status" value="1"/>
</dbReference>
<dbReference type="Pfam" id="PF00226">
    <property type="entry name" value="DnaJ"/>
    <property type="match status" value="1"/>
</dbReference>
<dbReference type="Pfam" id="PF01556">
    <property type="entry name" value="DnaJ_C"/>
    <property type="match status" value="1"/>
</dbReference>
<dbReference type="PRINTS" id="PR00625">
    <property type="entry name" value="JDOMAIN"/>
</dbReference>
<dbReference type="SMART" id="SM00271">
    <property type="entry name" value="DnaJ"/>
    <property type="match status" value="1"/>
</dbReference>
<dbReference type="SUPFAM" id="SSF46565">
    <property type="entry name" value="Chaperone J-domain"/>
    <property type="match status" value="1"/>
</dbReference>
<dbReference type="SUPFAM" id="SSF49493">
    <property type="entry name" value="HSP40/DnaJ peptide-binding domain"/>
    <property type="match status" value="2"/>
</dbReference>
<dbReference type="PROSITE" id="PS00636">
    <property type="entry name" value="DNAJ_1"/>
    <property type="match status" value="1"/>
</dbReference>
<dbReference type="PROSITE" id="PS50076">
    <property type="entry name" value="DNAJ_2"/>
    <property type="match status" value="1"/>
</dbReference>
<feature type="chain" id="PRO_0000169987" description="Curved DNA-binding protein">
    <location>
        <begin position="1"/>
        <end position="313"/>
    </location>
</feature>
<feature type="domain" description="J" evidence="1">
    <location>
        <begin position="5"/>
        <end position="69"/>
    </location>
</feature>
<feature type="region of interest" description="Disordered" evidence="2">
    <location>
        <begin position="71"/>
        <end position="93"/>
    </location>
</feature>
<protein>
    <recommendedName>
        <fullName evidence="1">Curved DNA-binding protein</fullName>
    </recommendedName>
</protein>
<evidence type="ECO:0000255" key="1">
    <source>
        <dbReference type="HAMAP-Rule" id="MF_01154"/>
    </source>
</evidence>
<evidence type="ECO:0000256" key="2">
    <source>
        <dbReference type="SAM" id="MobiDB-lite"/>
    </source>
</evidence>
<evidence type="ECO:0000305" key="3"/>
<name>CBPA_COXBU</name>
<gene>
    <name evidence="1" type="primary">cbpA</name>
    <name type="ordered locus">CBU_1123</name>
</gene>
<organism>
    <name type="scientific">Coxiella burnetii (strain RSA 493 / Nine Mile phase I)</name>
    <dbReference type="NCBI Taxonomy" id="227377"/>
    <lineage>
        <taxon>Bacteria</taxon>
        <taxon>Pseudomonadati</taxon>
        <taxon>Pseudomonadota</taxon>
        <taxon>Gammaproteobacteria</taxon>
        <taxon>Legionellales</taxon>
        <taxon>Coxiellaceae</taxon>
        <taxon>Coxiella</taxon>
    </lineage>
</organism>
<proteinExistence type="inferred from homology"/>
<accession>Q83CJ2</accession>
<comment type="function">
    <text evidence="1">DNA-binding protein that preferentially recognizes a curved DNA sequence. It is probably a functional analog of DnaJ; displays overlapping activities with DnaJ, but functions under different conditions, probably acting as a molecular chaperone in an adaptive response to environmental stresses other than heat shock. Lacks autonomous chaperone activity; binds native substrates and targets them for recognition by DnaK. Its activity is inhibited by the binding of CbpM.</text>
</comment>
<comment type="subcellular location">
    <subcellularLocation>
        <location evidence="1">Cytoplasm</location>
        <location evidence="1">Nucleoid</location>
    </subcellularLocation>
</comment>
<comment type="sequence caution" evidence="3">
    <conflict type="erroneous initiation">
        <sequence resource="EMBL-CDS" id="AAO90636"/>
    </conflict>
</comment>
<reference key="1">
    <citation type="journal article" date="2003" name="Proc. Natl. Acad. Sci. U.S.A.">
        <title>Complete genome sequence of the Q-fever pathogen, Coxiella burnetii.</title>
        <authorList>
            <person name="Seshadri R."/>
            <person name="Paulsen I.T."/>
            <person name="Eisen J.A."/>
            <person name="Read T.D."/>
            <person name="Nelson K.E."/>
            <person name="Nelson W.C."/>
            <person name="Ward N.L."/>
            <person name="Tettelin H."/>
            <person name="Davidsen T.M."/>
            <person name="Beanan M.J."/>
            <person name="DeBoy R.T."/>
            <person name="Daugherty S.C."/>
            <person name="Brinkac L.M."/>
            <person name="Madupu R."/>
            <person name="Dodson R.J."/>
            <person name="Khouri H.M."/>
            <person name="Lee K.H."/>
            <person name="Carty H.A."/>
            <person name="Scanlan D."/>
            <person name="Heinzen R.A."/>
            <person name="Thompson H.A."/>
            <person name="Samuel J.E."/>
            <person name="Fraser C.M."/>
            <person name="Heidelberg J.F."/>
        </authorList>
    </citation>
    <scope>NUCLEOTIDE SEQUENCE [LARGE SCALE GENOMIC DNA]</scope>
    <source>
        <strain>RSA 493 / Nine Mile phase I</strain>
    </source>
</reference>
<sequence length="313" mass="34935">MEYQDYYKILGVSRDATADEIKKSYRKLARKYHPDVSSEPNAEEKFKQVKEAYEVLKDVEKRKAYDAIGSGWKQGQGFTPPPGWESRPGGEGVRPEFREGFSDFFESLFGGLGQEARWTRQEFKQRGQDQHSRVTVSLEEAFNGSTRLLTLQEPIVDYQTGQVTSKTRQLRIKIPAGVTEGQQIRLQGQGLPGIGGAPNGDLYLEIHLAPHSLFTVEGKDVYLNLPVTPWEAALGAKVSIPTLGGSVDLTLPPGSQTGQKLRLKGRGLPGGTPGDQYVLIKIYIPEPKNDQQKELYQQMAEQMPFDPRKELLG</sequence>